<organism>
    <name type="scientific">Shigella flexneri serotype 5b (strain 8401)</name>
    <dbReference type="NCBI Taxonomy" id="373384"/>
    <lineage>
        <taxon>Bacteria</taxon>
        <taxon>Pseudomonadati</taxon>
        <taxon>Pseudomonadota</taxon>
        <taxon>Gammaproteobacteria</taxon>
        <taxon>Enterobacterales</taxon>
        <taxon>Enterobacteriaceae</taxon>
        <taxon>Shigella</taxon>
    </lineage>
</organism>
<evidence type="ECO:0000255" key="1">
    <source>
        <dbReference type="HAMAP-Rule" id="MF_00688"/>
    </source>
</evidence>
<comment type="function">
    <text evidence="1">Functions in the N-end rule pathway of protein degradation where it conjugates Leu, Phe and, less efficiently, Met from aminoacyl-tRNAs to the N-termini of proteins containing an N-terminal arginine or lysine.</text>
</comment>
<comment type="catalytic activity">
    <reaction evidence="1">
        <text>N-terminal L-lysyl-[protein] + L-leucyl-tRNA(Leu) = N-terminal L-leucyl-L-lysyl-[protein] + tRNA(Leu) + H(+)</text>
        <dbReference type="Rhea" id="RHEA:12340"/>
        <dbReference type="Rhea" id="RHEA-COMP:9613"/>
        <dbReference type="Rhea" id="RHEA-COMP:9622"/>
        <dbReference type="Rhea" id="RHEA-COMP:12670"/>
        <dbReference type="Rhea" id="RHEA-COMP:12671"/>
        <dbReference type="ChEBI" id="CHEBI:15378"/>
        <dbReference type="ChEBI" id="CHEBI:65249"/>
        <dbReference type="ChEBI" id="CHEBI:78442"/>
        <dbReference type="ChEBI" id="CHEBI:78494"/>
        <dbReference type="ChEBI" id="CHEBI:133043"/>
        <dbReference type="EC" id="2.3.2.6"/>
    </reaction>
</comment>
<comment type="catalytic activity">
    <reaction evidence="1">
        <text>N-terminal L-arginyl-[protein] + L-leucyl-tRNA(Leu) = N-terminal L-leucyl-L-arginyl-[protein] + tRNA(Leu) + H(+)</text>
        <dbReference type="Rhea" id="RHEA:50416"/>
        <dbReference type="Rhea" id="RHEA-COMP:9613"/>
        <dbReference type="Rhea" id="RHEA-COMP:9622"/>
        <dbReference type="Rhea" id="RHEA-COMP:12672"/>
        <dbReference type="Rhea" id="RHEA-COMP:12673"/>
        <dbReference type="ChEBI" id="CHEBI:15378"/>
        <dbReference type="ChEBI" id="CHEBI:64719"/>
        <dbReference type="ChEBI" id="CHEBI:78442"/>
        <dbReference type="ChEBI" id="CHEBI:78494"/>
        <dbReference type="ChEBI" id="CHEBI:133044"/>
        <dbReference type="EC" id="2.3.2.6"/>
    </reaction>
</comment>
<comment type="catalytic activity">
    <reaction evidence="1">
        <text>L-phenylalanyl-tRNA(Phe) + an N-terminal L-alpha-aminoacyl-[protein] = an N-terminal L-phenylalanyl-L-alpha-aminoacyl-[protein] + tRNA(Phe)</text>
        <dbReference type="Rhea" id="RHEA:43632"/>
        <dbReference type="Rhea" id="RHEA-COMP:9668"/>
        <dbReference type="Rhea" id="RHEA-COMP:9699"/>
        <dbReference type="Rhea" id="RHEA-COMP:10636"/>
        <dbReference type="Rhea" id="RHEA-COMP:10637"/>
        <dbReference type="ChEBI" id="CHEBI:78442"/>
        <dbReference type="ChEBI" id="CHEBI:78531"/>
        <dbReference type="ChEBI" id="CHEBI:78597"/>
        <dbReference type="ChEBI" id="CHEBI:83561"/>
        <dbReference type="EC" id="2.3.2.6"/>
    </reaction>
</comment>
<comment type="subcellular location">
    <subcellularLocation>
        <location evidence="1">Cytoplasm</location>
    </subcellularLocation>
</comment>
<comment type="similarity">
    <text evidence="1">Belongs to the L/F-transferase family.</text>
</comment>
<dbReference type="EC" id="2.3.2.6" evidence="1"/>
<dbReference type="EMBL" id="CP000266">
    <property type="protein sequence ID" value="ABF03101.1"/>
    <property type="molecule type" value="Genomic_DNA"/>
</dbReference>
<dbReference type="RefSeq" id="WP_001241669.1">
    <property type="nucleotide sequence ID" value="NC_008258.1"/>
</dbReference>
<dbReference type="SMR" id="Q0T8P1"/>
<dbReference type="KEGG" id="sfv:SFV_0876"/>
<dbReference type="HOGENOM" id="CLU_075045_0_0_6"/>
<dbReference type="Proteomes" id="UP000000659">
    <property type="component" value="Chromosome"/>
</dbReference>
<dbReference type="GO" id="GO:0005737">
    <property type="term" value="C:cytoplasm"/>
    <property type="evidence" value="ECO:0007669"/>
    <property type="project" value="UniProtKB-SubCell"/>
</dbReference>
<dbReference type="GO" id="GO:0008914">
    <property type="term" value="F:leucyl-tRNA--protein transferase activity"/>
    <property type="evidence" value="ECO:0007669"/>
    <property type="project" value="UniProtKB-UniRule"/>
</dbReference>
<dbReference type="GO" id="GO:0030163">
    <property type="term" value="P:protein catabolic process"/>
    <property type="evidence" value="ECO:0007669"/>
    <property type="project" value="UniProtKB-UniRule"/>
</dbReference>
<dbReference type="FunFam" id="3.30.70.3550:FF:000001">
    <property type="entry name" value="Leucyl/phenylalanyl-tRNA--protein transferase"/>
    <property type="match status" value="1"/>
</dbReference>
<dbReference type="FunFam" id="3.40.630.70:FF:000001">
    <property type="entry name" value="Leucyl/phenylalanyl-tRNA--protein transferase"/>
    <property type="match status" value="1"/>
</dbReference>
<dbReference type="Gene3D" id="3.40.630.70">
    <property type="entry name" value="Leucyl/phenylalanyl-tRNA-protein transferase, C-terminal domain"/>
    <property type="match status" value="1"/>
</dbReference>
<dbReference type="Gene3D" id="3.30.70.3550">
    <property type="entry name" value="Leucyl/phenylalanyl-tRNA-protein transferase, N-terminal domain"/>
    <property type="match status" value="1"/>
</dbReference>
<dbReference type="HAMAP" id="MF_00688">
    <property type="entry name" value="Leu_Phe_trans"/>
    <property type="match status" value="1"/>
</dbReference>
<dbReference type="InterPro" id="IPR016181">
    <property type="entry name" value="Acyl_CoA_acyltransferase"/>
</dbReference>
<dbReference type="InterPro" id="IPR004616">
    <property type="entry name" value="Leu/Phe-tRNA_Trfase"/>
</dbReference>
<dbReference type="InterPro" id="IPR042203">
    <property type="entry name" value="Leu/Phe-tRNA_Trfase_C"/>
</dbReference>
<dbReference type="InterPro" id="IPR042221">
    <property type="entry name" value="Leu/Phe-tRNA_Trfase_N"/>
</dbReference>
<dbReference type="NCBIfam" id="TIGR00667">
    <property type="entry name" value="aat"/>
    <property type="match status" value="1"/>
</dbReference>
<dbReference type="PANTHER" id="PTHR30098">
    <property type="entry name" value="LEUCYL/PHENYLALANYL-TRNA--PROTEIN TRANSFERASE"/>
    <property type="match status" value="1"/>
</dbReference>
<dbReference type="PANTHER" id="PTHR30098:SF2">
    <property type="entry name" value="LEUCYL_PHENYLALANYL-TRNA--PROTEIN TRANSFERASE"/>
    <property type="match status" value="1"/>
</dbReference>
<dbReference type="Pfam" id="PF03588">
    <property type="entry name" value="Leu_Phe_trans"/>
    <property type="match status" value="1"/>
</dbReference>
<dbReference type="SUPFAM" id="SSF55729">
    <property type="entry name" value="Acyl-CoA N-acyltransferases (Nat)"/>
    <property type="match status" value="1"/>
</dbReference>
<feature type="chain" id="PRO_0000304363" description="Leucyl/phenylalanyl-tRNA--protein transferase">
    <location>
        <begin position="1"/>
        <end position="234"/>
    </location>
</feature>
<name>LFTR_SHIF8</name>
<sequence>MRLVQLSRHSIAFPSPEGALREPNGLLALGGDLSPARLLMAYQRGIFPWFSPGDPILWWSPDPRAVLWPESLHISRSMKRFHKRSPYRVTMNYAFGQVIEGCASDREEGTWITRGVVEAYHRLHELGHAHSIEVWREDELVAGMYGVAQGTLFCGESMFSRMENASKTALLVFCEEFIGHAGKLIDCQVLNDHTASLGACEIPRRDYLNYLNQMRLGRLPNNFWVPRCLFSPQE</sequence>
<accession>Q0T8P1</accession>
<keyword id="KW-0012">Acyltransferase</keyword>
<keyword id="KW-0963">Cytoplasm</keyword>
<keyword id="KW-0808">Transferase</keyword>
<reference key="1">
    <citation type="journal article" date="2006" name="BMC Genomics">
        <title>Complete genome sequence of Shigella flexneri 5b and comparison with Shigella flexneri 2a.</title>
        <authorList>
            <person name="Nie H."/>
            <person name="Yang F."/>
            <person name="Zhang X."/>
            <person name="Yang J."/>
            <person name="Chen L."/>
            <person name="Wang J."/>
            <person name="Xiong Z."/>
            <person name="Peng J."/>
            <person name="Sun L."/>
            <person name="Dong J."/>
            <person name="Xue Y."/>
            <person name="Xu X."/>
            <person name="Chen S."/>
            <person name="Yao Z."/>
            <person name="Shen Y."/>
            <person name="Jin Q."/>
        </authorList>
    </citation>
    <scope>NUCLEOTIDE SEQUENCE [LARGE SCALE GENOMIC DNA]</scope>
    <source>
        <strain>8401</strain>
    </source>
</reference>
<protein>
    <recommendedName>
        <fullName evidence="1">Leucyl/phenylalanyl-tRNA--protein transferase</fullName>
        <ecNumber evidence="1">2.3.2.6</ecNumber>
    </recommendedName>
    <alternativeName>
        <fullName evidence="1">L/F-transferase</fullName>
    </alternativeName>
    <alternativeName>
        <fullName evidence="1">Leucyltransferase</fullName>
    </alternativeName>
    <alternativeName>
        <fullName evidence="1">Phenyalanyltransferase</fullName>
    </alternativeName>
</protein>
<gene>
    <name evidence="1" type="primary">aat</name>
    <name type="ordered locus">SFV_0876</name>
</gene>
<proteinExistence type="inferred from homology"/>